<organism>
    <name type="scientific">Pseudomonas syringae pv. syringae (strain B728a)</name>
    <dbReference type="NCBI Taxonomy" id="205918"/>
    <lineage>
        <taxon>Bacteria</taxon>
        <taxon>Pseudomonadati</taxon>
        <taxon>Pseudomonadota</taxon>
        <taxon>Gammaproteobacteria</taxon>
        <taxon>Pseudomonadales</taxon>
        <taxon>Pseudomonadaceae</taxon>
        <taxon>Pseudomonas</taxon>
        <taxon>Pseudomonas syringae</taxon>
    </lineage>
</organism>
<protein>
    <recommendedName>
        <fullName evidence="1">Oxygen-dependent coproporphyrinogen-III oxidase</fullName>
        <shortName evidence="1">CPO</shortName>
        <shortName evidence="1">Coprogen oxidase</shortName>
        <shortName evidence="1">Coproporphyrinogenase</shortName>
        <ecNumber evidence="1">1.3.3.3</ecNumber>
    </recommendedName>
</protein>
<accession>Q500S4</accession>
<reference key="1">
    <citation type="journal article" date="2005" name="Proc. Natl. Acad. Sci. U.S.A.">
        <title>Comparison of the complete genome sequences of Pseudomonas syringae pv. syringae B728a and pv. tomato DC3000.</title>
        <authorList>
            <person name="Feil H."/>
            <person name="Feil W.S."/>
            <person name="Chain P."/>
            <person name="Larimer F."/>
            <person name="Dibartolo G."/>
            <person name="Copeland A."/>
            <person name="Lykidis A."/>
            <person name="Trong S."/>
            <person name="Nolan M."/>
            <person name="Goltsman E."/>
            <person name="Thiel J."/>
            <person name="Malfatti S."/>
            <person name="Loper J.E."/>
            <person name="Lapidus A."/>
            <person name="Detter J.C."/>
            <person name="Land M."/>
            <person name="Richardson P.M."/>
            <person name="Kyrpides N.C."/>
            <person name="Ivanova N."/>
            <person name="Lindow S.E."/>
        </authorList>
    </citation>
    <scope>NUCLEOTIDE SEQUENCE [LARGE SCALE GENOMIC DNA]</scope>
    <source>
        <strain>B728a</strain>
    </source>
</reference>
<sequence>MSTRTEAVKAYLLDLQDRICTALEQEDGSAHFMEDAWTRPAGGGGRTRVIENGTVIEKGGVNFSHVFGSNLPPSASAHRPELAGRGFEALGVSLVIHPHNPHVPTSHANVRFFIAEKEGEEAVWWFGGGFDLTPYYGVEEDCVHWHRVAERACAPFGEDVYPRYKAWCDSYFHLKHRDEPRGIGGLFFDDVNQWDFDTSFAFIRAIGDAFINAYLPIVRRRKAAAYTVQQREFQEFRRGRYVEFNLVYDRGTLFGLQSGGRTESILMSLPPQVRWGYDWKAAPGSEEARLTEYFLTDRDWLAEN</sequence>
<evidence type="ECO:0000255" key="1">
    <source>
        <dbReference type="HAMAP-Rule" id="MF_00333"/>
    </source>
</evidence>
<name>HEM6_PSEU2</name>
<proteinExistence type="inferred from homology"/>
<dbReference type="EC" id="1.3.3.3" evidence="1"/>
<dbReference type="EMBL" id="CP000075">
    <property type="protein sequence ID" value="AAY35098.1"/>
    <property type="molecule type" value="Genomic_DNA"/>
</dbReference>
<dbReference type="RefSeq" id="WP_003401477.1">
    <property type="nucleotide sequence ID" value="NC_007005.1"/>
</dbReference>
<dbReference type="RefSeq" id="YP_233136.1">
    <property type="nucleotide sequence ID" value="NC_007005.1"/>
</dbReference>
<dbReference type="SMR" id="Q500S4"/>
<dbReference type="STRING" id="205918.Psyr_0024"/>
<dbReference type="GeneID" id="65077692"/>
<dbReference type="KEGG" id="psb:Psyr_0024"/>
<dbReference type="PATRIC" id="fig|205918.7.peg.24"/>
<dbReference type="eggNOG" id="COG0408">
    <property type="taxonomic scope" value="Bacteria"/>
</dbReference>
<dbReference type="HOGENOM" id="CLU_026169_0_1_6"/>
<dbReference type="OrthoDB" id="9777553at2"/>
<dbReference type="UniPathway" id="UPA00251">
    <property type="reaction ID" value="UER00322"/>
</dbReference>
<dbReference type="Proteomes" id="UP000000426">
    <property type="component" value="Chromosome"/>
</dbReference>
<dbReference type="GO" id="GO:0005737">
    <property type="term" value="C:cytoplasm"/>
    <property type="evidence" value="ECO:0007669"/>
    <property type="project" value="UniProtKB-SubCell"/>
</dbReference>
<dbReference type="GO" id="GO:0004109">
    <property type="term" value="F:coproporphyrinogen oxidase activity"/>
    <property type="evidence" value="ECO:0007669"/>
    <property type="project" value="UniProtKB-UniRule"/>
</dbReference>
<dbReference type="GO" id="GO:0046872">
    <property type="term" value="F:metal ion binding"/>
    <property type="evidence" value="ECO:0007669"/>
    <property type="project" value="UniProtKB-KW"/>
</dbReference>
<dbReference type="GO" id="GO:0042803">
    <property type="term" value="F:protein homodimerization activity"/>
    <property type="evidence" value="ECO:0000250"/>
    <property type="project" value="UniProtKB"/>
</dbReference>
<dbReference type="GO" id="GO:0006782">
    <property type="term" value="P:protoporphyrinogen IX biosynthetic process"/>
    <property type="evidence" value="ECO:0007669"/>
    <property type="project" value="UniProtKB-UniRule"/>
</dbReference>
<dbReference type="FunFam" id="3.40.1500.10:FF:000001">
    <property type="entry name" value="Oxygen-dependent coproporphyrinogen-III oxidase"/>
    <property type="match status" value="1"/>
</dbReference>
<dbReference type="Gene3D" id="3.40.1500.10">
    <property type="entry name" value="Coproporphyrinogen III oxidase, aerobic"/>
    <property type="match status" value="1"/>
</dbReference>
<dbReference type="HAMAP" id="MF_00333">
    <property type="entry name" value="Coprogen_oxidas"/>
    <property type="match status" value="1"/>
</dbReference>
<dbReference type="InterPro" id="IPR001260">
    <property type="entry name" value="Coprogen_oxidase_aer"/>
</dbReference>
<dbReference type="InterPro" id="IPR036406">
    <property type="entry name" value="Coprogen_oxidase_aer_sf"/>
</dbReference>
<dbReference type="InterPro" id="IPR018375">
    <property type="entry name" value="Coprogen_oxidase_CS"/>
</dbReference>
<dbReference type="NCBIfam" id="NF003727">
    <property type="entry name" value="PRK05330.1"/>
    <property type="match status" value="1"/>
</dbReference>
<dbReference type="PANTHER" id="PTHR10755">
    <property type="entry name" value="COPROPORPHYRINOGEN III OXIDASE, MITOCHONDRIAL"/>
    <property type="match status" value="1"/>
</dbReference>
<dbReference type="PANTHER" id="PTHR10755:SF0">
    <property type="entry name" value="OXYGEN-DEPENDENT COPROPORPHYRINOGEN-III OXIDASE, MITOCHONDRIAL"/>
    <property type="match status" value="1"/>
</dbReference>
<dbReference type="Pfam" id="PF01218">
    <property type="entry name" value="Coprogen_oxidas"/>
    <property type="match status" value="1"/>
</dbReference>
<dbReference type="PIRSF" id="PIRSF000166">
    <property type="entry name" value="Coproporphyri_ox"/>
    <property type="match status" value="1"/>
</dbReference>
<dbReference type="PRINTS" id="PR00073">
    <property type="entry name" value="COPRGNOXDASE"/>
</dbReference>
<dbReference type="SUPFAM" id="SSF102886">
    <property type="entry name" value="Coproporphyrinogen III oxidase"/>
    <property type="match status" value="1"/>
</dbReference>
<dbReference type="PROSITE" id="PS01021">
    <property type="entry name" value="COPROGEN_OXIDASE"/>
    <property type="match status" value="1"/>
</dbReference>
<comment type="function">
    <text evidence="1">Involved in the heme biosynthesis. Catalyzes the aerobic oxidative decarboxylation of propionate groups of rings A and B of coproporphyrinogen-III to yield the vinyl groups in protoporphyrinogen-IX.</text>
</comment>
<comment type="catalytic activity">
    <reaction evidence="1">
        <text>coproporphyrinogen III + O2 + 2 H(+) = protoporphyrinogen IX + 2 CO2 + 2 H2O</text>
        <dbReference type="Rhea" id="RHEA:18257"/>
        <dbReference type="ChEBI" id="CHEBI:15377"/>
        <dbReference type="ChEBI" id="CHEBI:15378"/>
        <dbReference type="ChEBI" id="CHEBI:15379"/>
        <dbReference type="ChEBI" id="CHEBI:16526"/>
        <dbReference type="ChEBI" id="CHEBI:57307"/>
        <dbReference type="ChEBI" id="CHEBI:57309"/>
        <dbReference type="EC" id="1.3.3.3"/>
    </reaction>
</comment>
<comment type="cofactor">
    <cofactor evidence="1">
        <name>a divalent metal cation</name>
        <dbReference type="ChEBI" id="CHEBI:60240"/>
    </cofactor>
</comment>
<comment type="pathway">
    <text evidence="1">Porphyrin-containing compound metabolism; protoporphyrin-IX biosynthesis; protoporphyrinogen-IX from coproporphyrinogen-III (O2 route): step 1/1.</text>
</comment>
<comment type="subunit">
    <text evidence="1">Homodimer.</text>
</comment>
<comment type="subcellular location">
    <subcellularLocation>
        <location evidence="1">Cytoplasm</location>
    </subcellularLocation>
</comment>
<comment type="similarity">
    <text evidence="1">Belongs to the aerobic coproporphyrinogen-III oxidase family.</text>
</comment>
<keyword id="KW-0963">Cytoplasm</keyword>
<keyword id="KW-0350">Heme biosynthesis</keyword>
<keyword id="KW-0479">Metal-binding</keyword>
<keyword id="KW-0560">Oxidoreductase</keyword>
<keyword id="KW-0627">Porphyrin biosynthesis</keyword>
<feature type="chain" id="PRO_1000019490" description="Oxygen-dependent coproporphyrinogen-III oxidase">
    <location>
        <begin position="1"/>
        <end position="304"/>
    </location>
</feature>
<feature type="region of interest" description="Important for dimerization" evidence="1">
    <location>
        <begin position="241"/>
        <end position="276"/>
    </location>
</feature>
<feature type="active site" description="Proton donor" evidence="1">
    <location>
        <position position="107"/>
    </location>
</feature>
<feature type="binding site" evidence="1">
    <location>
        <position position="93"/>
    </location>
    <ligand>
        <name>substrate</name>
    </ligand>
</feature>
<feature type="binding site" evidence="1">
    <location>
        <position position="97"/>
    </location>
    <ligand>
        <name>a divalent metal cation</name>
        <dbReference type="ChEBI" id="CHEBI:60240"/>
    </ligand>
</feature>
<feature type="binding site" evidence="1">
    <location>
        <position position="107"/>
    </location>
    <ligand>
        <name>a divalent metal cation</name>
        <dbReference type="ChEBI" id="CHEBI:60240"/>
    </ligand>
</feature>
<feature type="binding site" evidence="1">
    <location>
        <begin position="109"/>
        <end position="111"/>
    </location>
    <ligand>
        <name>substrate</name>
    </ligand>
</feature>
<feature type="binding site" evidence="1">
    <location>
        <position position="146"/>
    </location>
    <ligand>
        <name>a divalent metal cation</name>
        <dbReference type="ChEBI" id="CHEBI:60240"/>
    </ligand>
</feature>
<feature type="binding site" evidence="1">
    <location>
        <position position="176"/>
    </location>
    <ligand>
        <name>a divalent metal cation</name>
        <dbReference type="ChEBI" id="CHEBI:60240"/>
    </ligand>
</feature>
<feature type="binding site" evidence="1">
    <location>
        <begin position="259"/>
        <end position="261"/>
    </location>
    <ligand>
        <name>substrate</name>
    </ligand>
</feature>
<feature type="site" description="Important for dimerization" evidence="1">
    <location>
        <position position="176"/>
    </location>
</feature>
<gene>
    <name evidence="1" type="primary">hemF</name>
    <name type="ordered locus">Psyr_0024</name>
</gene>